<dbReference type="EMBL" id="BX548174">
    <property type="protein sequence ID" value="CAE19899.1"/>
    <property type="status" value="ALT_INIT"/>
    <property type="molecule type" value="Genomic_DNA"/>
</dbReference>
<dbReference type="SMR" id="Q7V048"/>
<dbReference type="STRING" id="59919.PMM1440"/>
<dbReference type="KEGG" id="pmm:PMM1440"/>
<dbReference type="eggNOG" id="ENOG503137T">
    <property type="taxonomic scope" value="Bacteria"/>
</dbReference>
<dbReference type="HOGENOM" id="CLU_132693_0_0_3"/>
<dbReference type="Proteomes" id="UP000001026">
    <property type="component" value="Chromosome"/>
</dbReference>
<dbReference type="GO" id="GO:1990904">
    <property type="term" value="C:ribonucleoprotein complex"/>
    <property type="evidence" value="ECO:0007669"/>
    <property type="project" value="UniProtKB-KW"/>
</dbReference>
<dbReference type="GO" id="GO:0005840">
    <property type="term" value="C:ribosome"/>
    <property type="evidence" value="ECO:0007669"/>
    <property type="project" value="UniProtKB-KW"/>
</dbReference>
<dbReference type="GO" id="GO:0003735">
    <property type="term" value="F:structural constituent of ribosome"/>
    <property type="evidence" value="ECO:0007669"/>
    <property type="project" value="InterPro"/>
</dbReference>
<dbReference type="GO" id="GO:0006412">
    <property type="term" value="P:translation"/>
    <property type="evidence" value="ECO:0007669"/>
    <property type="project" value="UniProtKB-UniRule"/>
</dbReference>
<dbReference type="Gene3D" id="3.30.390.140">
    <property type="match status" value="1"/>
</dbReference>
<dbReference type="HAMAP" id="MF_00619">
    <property type="entry name" value="Ribosomal_plastid_cS23"/>
    <property type="match status" value="1"/>
</dbReference>
<dbReference type="InterPro" id="IPR038447">
    <property type="entry name" value="PSRP-3/Ycf65_sf"/>
</dbReference>
<dbReference type="InterPro" id="IPR006924">
    <property type="entry name" value="Ribosomal_PSRP3/Ycf65"/>
</dbReference>
<dbReference type="NCBIfam" id="NF002740">
    <property type="entry name" value="PRK02724.1"/>
    <property type="match status" value="1"/>
</dbReference>
<dbReference type="PANTHER" id="PTHR35108">
    <property type="entry name" value="30S RIBOSOMAL PROTEIN 3, CHLOROPLASTIC"/>
    <property type="match status" value="1"/>
</dbReference>
<dbReference type="PANTHER" id="PTHR35108:SF1">
    <property type="entry name" value="OS04G0461100 PROTEIN"/>
    <property type="match status" value="1"/>
</dbReference>
<dbReference type="Pfam" id="PF04839">
    <property type="entry name" value="PSRP-3_Ycf65"/>
    <property type="match status" value="1"/>
</dbReference>
<feature type="chain" id="PRO_0000216751" description="Probable small ribosomal subunit protein cS23">
    <location>
        <begin position="1"/>
        <end position="126"/>
    </location>
</feature>
<sequence length="126" mass="14106">MMGANAVLAAAKIDEDGVPTGYTPKPDEGRFIIKILWLPDNVALAVDQIVGGGSSPLTAYYFWPRDDAWEKLKSELENKSWITDNERVEILNKATEVINYWQEEGKTKKLEEAKLKFPEVAFCGTA</sequence>
<accession>Q7V048</accession>
<comment type="function">
    <text evidence="1">Probably a ribosomal protein or a ribosome-associated protein.</text>
</comment>
<comment type="subunit">
    <text evidence="1">Part of the 30S ribosomal subunit.</text>
</comment>
<comment type="similarity">
    <text evidence="1">Belongs to the chloroplast-specific ribosomal protein cS23 family.</text>
</comment>
<comment type="sequence caution" evidence="2">
    <conflict type="erroneous initiation">
        <sequence resource="EMBL-CDS" id="CAE19899"/>
    </conflict>
    <text>Extended N-terminus.</text>
</comment>
<keyword id="KW-0687">Ribonucleoprotein</keyword>
<keyword id="KW-0689">Ribosomal protein</keyword>
<name>RRP3_PROMP</name>
<evidence type="ECO:0000255" key="1">
    <source>
        <dbReference type="HAMAP-Rule" id="MF_00619"/>
    </source>
</evidence>
<evidence type="ECO:0000305" key="2"/>
<proteinExistence type="inferred from homology"/>
<gene>
    <name type="ordered locus">PMM1440</name>
</gene>
<reference key="1">
    <citation type="journal article" date="2003" name="Nature">
        <title>Genome divergence in two Prochlorococcus ecotypes reflects oceanic niche differentiation.</title>
        <authorList>
            <person name="Rocap G."/>
            <person name="Larimer F.W."/>
            <person name="Lamerdin J.E."/>
            <person name="Malfatti S."/>
            <person name="Chain P."/>
            <person name="Ahlgren N.A."/>
            <person name="Arellano A."/>
            <person name="Coleman M."/>
            <person name="Hauser L."/>
            <person name="Hess W.R."/>
            <person name="Johnson Z.I."/>
            <person name="Land M.L."/>
            <person name="Lindell D."/>
            <person name="Post A.F."/>
            <person name="Regala W."/>
            <person name="Shah M."/>
            <person name="Shaw S.L."/>
            <person name="Steglich C."/>
            <person name="Sullivan M.B."/>
            <person name="Ting C.S."/>
            <person name="Tolonen A."/>
            <person name="Webb E.A."/>
            <person name="Zinser E.R."/>
            <person name="Chisholm S.W."/>
        </authorList>
    </citation>
    <scope>NUCLEOTIDE SEQUENCE [LARGE SCALE GENOMIC DNA]</scope>
    <source>
        <strain>CCMP1986 / NIES-2087 / MED4</strain>
    </source>
</reference>
<organism>
    <name type="scientific">Prochlorococcus marinus subsp. pastoris (strain CCMP1986 / NIES-2087 / MED4)</name>
    <dbReference type="NCBI Taxonomy" id="59919"/>
    <lineage>
        <taxon>Bacteria</taxon>
        <taxon>Bacillati</taxon>
        <taxon>Cyanobacteriota</taxon>
        <taxon>Cyanophyceae</taxon>
        <taxon>Synechococcales</taxon>
        <taxon>Prochlorococcaceae</taxon>
        <taxon>Prochlorococcus</taxon>
    </lineage>
</organism>
<protein>
    <recommendedName>
        <fullName evidence="1">Probable small ribosomal subunit protein cS23</fullName>
    </recommendedName>
    <alternativeName>
        <fullName>Probable 30S ribosomal protein PSRP-3</fullName>
    </alternativeName>
    <alternativeName>
        <fullName>Ycf65-like protein</fullName>
    </alternativeName>
</protein>